<gene>
    <name evidence="1" type="primary">prcA</name>
    <name type="ordered locus">Mkms_3190</name>
</gene>
<keyword id="KW-0963">Cytoplasm</keyword>
<keyword id="KW-0647">Proteasome</keyword>
<dbReference type="EMBL" id="CP000518">
    <property type="protein sequence ID" value="ABL92384.1"/>
    <property type="molecule type" value="Genomic_DNA"/>
</dbReference>
<dbReference type="SMR" id="A1UHS6"/>
<dbReference type="STRING" id="189918.Mkms_3190"/>
<dbReference type="MEROPS" id="T01.980"/>
<dbReference type="KEGG" id="mkm:Mkms_3190"/>
<dbReference type="HOGENOM" id="CLU_071031_0_0_11"/>
<dbReference type="OrthoDB" id="9775643at2"/>
<dbReference type="UniPathway" id="UPA00997"/>
<dbReference type="GO" id="GO:0005737">
    <property type="term" value="C:cytoplasm"/>
    <property type="evidence" value="ECO:0007669"/>
    <property type="project" value="UniProtKB-SubCell"/>
</dbReference>
<dbReference type="GO" id="GO:0019773">
    <property type="term" value="C:proteasome core complex, alpha-subunit complex"/>
    <property type="evidence" value="ECO:0007669"/>
    <property type="project" value="UniProtKB-UniRule"/>
</dbReference>
<dbReference type="GO" id="GO:0004298">
    <property type="term" value="F:threonine-type endopeptidase activity"/>
    <property type="evidence" value="ECO:0007669"/>
    <property type="project" value="InterPro"/>
</dbReference>
<dbReference type="GO" id="GO:0019941">
    <property type="term" value="P:modification-dependent protein catabolic process"/>
    <property type="evidence" value="ECO:0007669"/>
    <property type="project" value="UniProtKB-UniRule"/>
</dbReference>
<dbReference type="GO" id="GO:0010498">
    <property type="term" value="P:proteasomal protein catabolic process"/>
    <property type="evidence" value="ECO:0007669"/>
    <property type="project" value="UniProtKB-UniRule"/>
</dbReference>
<dbReference type="CDD" id="cd01901">
    <property type="entry name" value="Ntn_hydrolase"/>
    <property type="match status" value="1"/>
</dbReference>
<dbReference type="FunFam" id="3.60.20.10:FF:000023">
    <property type="entry name" value="Proteasome subunit alpha"/>
    <property type="match status" value="1"/>
</dbReference>
<dbReference type="Gene3D" id="3.60.20.10">
    <property type="entry name" value="Glutamine Phosphoribosylpyrophosphate, subunit 1, domain 1"/>
    <property type="match status" value="1"/>
</dbReference>
<dbReference type="HAMAP" id="MF_00289_B">
    <property type="entry name" value="Proteasome_A_B"/>
    <property type="match status" value="1"/>
</dbReference>
<dbReference type="InterPro" id="IPR029055">
    <property type="entry name" value="Ntn_hydrolases_N"/>
</dbReference>
<dbReference type="InterPro" id="IPR050115">
    <property type="entry name" value="Proteasome_alpha"/>
</dbReference>
<dbReference type="InterPro" id="IPR023332">
    <property type="entry name" value="Proteasome_alpha-type"/>
</dbReference>
<dbReference type="InterPro" id="IPR022296">
    <property type="entry name" value="Proteasome_asu_bac"/>
</dbReference>
<dbReference type="InterPro" id="IPR001353">
    <property type="entry name" value="Proteasome_sua/b"/>
</dbReference>
<dbReference type="NCBIfam" id="TIGR03691">
    <property type="entry name" value="20S_bact_alpha"/>
    <property type="match status" value="1"/>
</dbReference>
<dbReference type="PANTHER" id="PTHR11599">
    <property type="entry name" value="PROTEASOME SUBUNIT ALPHA/BETA"/>
    <property type="match status" value="1"/>
</dbReference>
<dbReference type="Pfam" id="PF00227">
    <property type="entry name" value="Proteasome"/>
    <property type="match status" value="1"/>
</dbReference>
<dbReference type="SUPFAM" id="SSF56235">
    <property type="entry name" value="N-terminal nucleophile aminohydrolases (Ntn hydrolases)"/>
    <property type="match status" value="1"/>
</dbReference>
<dbReference type="PROSITE" id="PS51475">
    <property type="entry name" value="PROTEASOME_ALPHA_2"/>
    <property type="match status" value="1"/>
</dbReference>
<proteinExistence type="inferred from homology"/>
<accession>A1UHS6</accession>
<protein>
    <recommendedName>
        <fullName evidence="1">Proteasome subunit alpha</fullName>
    </recommendedName>
    <alternativeName>
        <fullName evidence="1">20S proteasome alpha subunit</fullName>
    </alternativeName>
    <alternativeName>
        <fullName evidence="1">Proteasome core protein PrcA</fullName>
    </alternativeName>
</protein>
<evidence type="ECO:0000255" key="1">
    <source>
        <dbReference type="HAMAP-Rule" id="MF_00289"/>
    </source>
</evidence>
<sequence length="250" mass="27157">MSFPYFISPEQAMRERSELARKGIARGRSVVALAYADGVLFVAENPSRSLQKVSELYDRVGFAAVGRFNEFNNLRSGGIRFADTQGYAYSRRDVTGRQLANVYAQTLGTIFTEQAKPYEVELCVAEVAHFGESKAPELYRITYDGSIADEPHFVVMGGATEPIIAKLNDSYTENAELADAVRIAVDALESGGNGAERRTLGPSTLEVAILDANRPRRAFRRITGSALEALLPQRDAEASADAGAADKPAE</sequence>
<comment type="function">
    <text evidence="1">Component of the proteasome core, a large protease complex with broad specificity involved in protein degradation.</text>
</comment>
<comment type="activity regulation">
    <text evidence="1">The formation of the proteasomal ATPase ARC-20S proteasome complex, likely via the docking of the C-termini of ARC into the intersubunit pockets in the alpha-rings, may trigger opening of the gate for substrate entry. Interconversion between the open-gate and close-gate conformations leads to a dynamic regulation of the 20S proteasome proteolysis activity.</text>
</comment>
<comment type="pathway">
    <text evidence="1">Protein degradation; proteasomal Pup-dependent pathway.</text>
</comment>
<comment type="subunit">
    <text evidence="1">The 20S proteasome core is composed of 14 alpha and 14 beta subunits that assemble into four stacked heptameric rings, resulting in a barrel-shaped structure. The two inner rings, each composed of seven catalytic beta subunits, are sandwiched by two outer rings, each composed of seven alpha subunits. The catalytic chamber with the active sites is on the inside of the barrel. Has a gated structure, the ends of the cylinder being occluded by the N-termini of the alpha-subunits. Is capped by the proteasome-associated ATPase, ARC.</text>
</comment>
<comment type="subcellular location">
    <subcellularLocation>
        <location evidence="1">Cytoplasm</location>
    </subcellularLocation>
</comment>
<comment type="similarity">
    <text evidence="1">Belongs to the peptidase T1A family.</text>
</comment>
<name>PSA_MYCSK</name>
<reference key="1">
    <citation type="submission" date="2006-12" db="EMBL/GenBank/DDBJ databases">
        <title>Complete sequence of chromosome of Mycobacterium sp. KMS.</title>
        <authorList>
            <consortium name="US DOE Joint Genome Institute"/>
            <person name="Copeland A."/>
            <person name="Lucas S."/>
            <person name="Lapidus A."/>
            <person name="Barry K."/>
            <person name="Detter J.C."/>
            <person name="Glavina del Rio T."/>
            <person name="Hammon N."/>
            <person name="Israni S."/>
            <person name="Dalin E."/>
            <person name="Tice H."/>
            <person name="Pitluck S."/>
            <person name="Kiss H."/>
            <person name="Brettin T."/>
            <person name="Bruce D."/>
            <person name="Han C."/>
            <person name="Tapia R."/>
            <person name="Gilna P."/>
            <person name="Schmutz J."/>
            <person name="Larimer F."/>
            <person name="Land M."/>
            <person name="Hauser L."/>
            <person name="Kyrpides N."/>
            <person name="Mikhailova N."/>
            <person name="Miller C.D."/>
            <person name="Richardson P."/>
        </authorList>
    </citation>
    <scope>NUCLEOTIDE SEQUENCE [LARGE SCALE GENOMIC DNA]</scope>
    <source>
        <strain>KMS</strain>
    </source>
</reference>
<organism>
    <name type="scientific">Mycobacterium sp. (strain KMS)</name>
    <dbReference type="NCBI Taxonomy" id="189918"/>
    <lineage>
        <taxon>Bacteria</taxon>
        <taxon>Bacillati</taxon>
        <taxon>Actinomycetota</taxon>
        <taxon>Actinomycetes</taxon>
        <taxon>Mycobacteriales</taxon>
        <taxon>Mycobacteriaceae</taxon>
        <taxon>Mycobacterium</taxon>
    </lineage>
</organism>
<feature type="chain" id="PRO_0000397156" description="Proteasome subunit alpha">
    <location>
        <begin position="1"/>
        <end position="250"/>
    </location>
</feature>